<comment type="function">
    <text evidence="1">Interacts with the SecY protein in vivo. May bind preferentially to an uncomplexed state of SecY, thus functioning either as a chelating agent for excess SecY in the cell or as a regulatory factor that negatively controls the translocase function.</text>
</comment>
<comment type="subcellular location">
    <subcellularLocation>
        <location evidence="1">Cell inner membrane</location>
        <topology evidence="1">Peripheral membrane protein</topology>
        <orientation evidence="1">Cytoplasmic side</orientation>
    </subcellularLocation>
    <text evidence="1">Loosely associated with the cytoplasmic side of the inner membrane, probably via SecY.</text>
</comment>
<comment type="similarity">
    <text evidence="1">Belongs to the Syd family.</text>
</comment>
<proteinExistence type="inferred from homology"/>
<name>SYDP_KLEP3</name>
<protein>
    <recommendedName>
        <fullName evidence="1">Protein Syd</fullName>
    </recommendedName>
</protein>
<feature type="chain" id="PRO_1000137034" description="Protein Syd">
    <location>
        <begin position="1"/>
        <end position="181"/>
    </location>
</feature>
<dbReference type="EMBL" id="CP000964">
    <property type="protein sequence ID" value="ACI07536.1"/>
    <property type="molecule type" value="Genomic_DNA"/>
</dbReference>
<dbReference type="SMR" id="B5XV06"/>
<dbReference type="KEGG" id="kpe:KPK_0986"/>
<dbReference type="HOGENOM" id="CLU_121866_0_0_6"/>
<dbReference type="Proteomes" id="UP000001734">
    <property type="component" value="Chromosome"/>
</dbReference>
<dbReference type="GO" id="GO:0009898">
    <property type="term" value="C:cytoplasmic side of plasma membrane"/>
    <property type="evidence" value="ECO:0007669"/>
    <property type="project" value="InterPro"/>
</dbReference>
<dbReference type="CDD" id="cd16323">
    <property type="entry name" value="Syd"/>
    <property type="match status" value="1"/>
</dbReference>
<dbReference type="Gene3D" id="3.40.1580.20">
    <property type="entry name" value="Syd protein"/>
    <property type="match status" value="1"/>
</dbReference>
<dbReference type="HAMAP" id="MF_01104">
    <property type="entry name" value="Syd"/>
    <property type="match status" value="1"/>
</dbReference>
<dbReference type="InterPro" id="IPR009948">
    <property type="entry name" value="Syd"/>
</dbReference>
<dbReference type="InterPro" id="IPR038228">
    <property type="entry name" value="Syd_sf"/>
</dbReference>
<dbReference type="NCBIfam" id="NF003439">
    <property type="entry name" value="PRK04968.1"/>
    <property type="match status" value="1"/>
</dbReference>
<dbReference type="Pfam" id="PF07348">
    <property type="entry name" value="Syd"/>
    <property type="match status" value="1"/>
</dbReference>
<evidence type="ECO:0000255" key="1">
    <source>
        <dbReference type="HAMAP-Rule" id="MF_01104"/>
    </source>
</evidence>
<accession>B5XV06</accession>
<keyword id="KW-0997">Cell inner membrane</keyword>
<keyword id="KW-1003">Cell membrane</keyword>
<keyword id="KW-0472">Membrane</keyword>
<sequence>MDHQTAEALRAFTQRYCAAWQQQRNSLPRSEELYGVPSPCVVDTQGEAVFWQPQPFSLAQNISAVERALDIVVQQPLHSYYTTQFAGDMTGRFADETLTLLQTWSEEDFQRVQENLIGHLVVQKRLKLAPTLFIATLESGRDVISVCNLSGEVIKETLGTAKRITLSPSLASFLSHLEPVL</sequence>
<organism>
    <name type="scientific">Klebsiella pneumoniae (strain 342)</name>
    <dbReference type="NCBI Taxonomy" id="507522"/>
    <lineage>
        <taxon>Bacteria</taxon>
        <taxon>Pseudomonadati</taxon>
        <taxon>Pseudomonadota</taxon>
        <taxon>Gammaproteobacteria</taxon>
        <taxon>Enterobacterales</taxon>
        <taxon>Enterobacteriaceae</taxon>
        <taxon>Klebsiella/Raoultella group</taxon>
        <taxon>Klebsiella</taxon>
        <taxon>Klebsiella pneumoniae complex</taxon>
    </lineage>
</organism>
<reference key="1">
    <citation type="journal article" date="2008" name="PLoS Genet.">
        <title>Complete genome sequence of the N2-fixing broad host range endophyte Klebsiella pneumoniae 342 and virulence predictions verified in mice.</title>
        <authorList>
            <person name="Fouts D.E."/>
            <person name="Tyler H.L."/>
            <person name="DeBoy R.T."/>
            <person name="Daugherty S."/>
            <person name="Ren Q."/>
            <person name="Badger J.H."/>
            <person name="Durkin A.S."/>
            <person name="Huot H."/>
            <person name="Shrivastava S."/>
            <person name="Kothari S."/>
            <person name="Dodson R.J."/>
            <person name="Mohamoud Y."/>
            <person name="Khouri H."/>
            <person name="Roesch L.F.W."/>
            <person name="Krogfelt K.A."/>
            <person name="Struve C."/>
            <person name="Triplett E.W."/>
            <person name="Methe B.A."/>
        </authorList>
    </citation>
    <scope>NUCLEOTIDE SEQUENCE [LARGE SCALE GENOMIC DNA]</scope>
    <source>
        <strain>342</strain>
    </source>
</reference>
<gene>
    <name evidence="1" type="primary">syd</name>
    <name type="ordered locus">KPK_0986</name>
</gene>